<protein>
    <recommendedName>
        <fullName>Uncharacterized protein TRE1</fullName>
    </recommendedName>
    <alternativeName>
        <fullName>Transferrin receptor-like protein 1</fullName>
    </alternativeName>
</protein>
<sequence length="783" mass="88756">MVNTRGYTTLPNVEEPANNSQDELNSQDFEQAIGMPSEPPVYVEEMGMEEPQAPEAFSEKVQRFRMCFENNVVIPVKKNVVDPLAQMISLASEKFDLFLSKIGNVMVMRRIFYIMMMSIIAALIIASDRLPNGKARGSNGSFSDHDLLLQYARKSIDLSKIERDLEYISSMPHMSGTSGDAAIRHYIKESFDKNGIRLAGEEEFMAYSNYPGNVSLRVYSKDDTEGFDIPLNEENFNPMSHNGQLNNIPVIYANKASLDDMASMQDQGLLNGDFILLVHYGDYVFQQMLTAQEYGAKAIIFISEPYQDNKDVIQMKSVALPQYGTGDALTPEWEGSIRDPIDATEAKCLPKIPSIPISANQGDKILAILSDTGVKFSNNLFSGSLNDCRLDLLVQTAIRERHPVHDIVGKIEGSEQAGRAIVIAAPRNSASYGTMYPSFGTVVLLSLIQLYQEMVYKFDWKPLRNIYFISFGGSEFNEAGATELMEKRTEALKSEIYTIIDVGQIGIWDDSNNLEIQCHPLLVDLFQKNMTSRKFNVKVDNVHQFGDWTPYLAQGIPVAIISSPGVMNREHPIYTVEDKFDFIKDKLRDKKKGEVLSEIMLYLVEKSLELIDDPFIPFSISNYVDFLSTTLKDLQKECPDTVNFDEVFLGTTLWENTKLQFEKWKSEWTELMYGAGTYIEPTIIAINRWSWNYLLSLIGVTQCLEEGLMDRTFYKNVIFGPKLWVDKGDPLRSWTFPEIRDTIAIKDWSSVQVQANTLGTILQNTARYFLENKNLHGINTNEF</sequence>
<keyword id="KW-1003">Cell membrane</keyword>
<keyword id="KW-0325">Glycoprotein</keyword>
<keyword id="KW-0472">Membrane</keyword>
<keyword id="KW-1185">Reference proteome</keyword>
<keyword id="KW-0735">Signal-anchor</keyword>
<keyword id="KW-0812">Transmembrane</keyword>
<keyword id="KW-1133">Transmembrane helix</keyword>
<proteinExistence type="evidence at protein level"/>
<gene>
    <name type="primary">TRE1</name>
    <name type="ordered locus">YPL176C</name>
</gene>
<dbReference type="EMBL" id="Z73532">
    <property type="protein sequence ID" value="CAA97883.1"/>
    <property type="molecule type" value="Genomic_DNA"/>
</dbReference>
<dbReference type="EMBL" id="BK006949">
    <property type="protein sequence ID" value="DAA11258.1"/>
    <property type="molecule type" value="Genomic_DNA"/>
</dbReference>
<dbReference type="PIR" id="S65188">
    <property type="entry name" value="S65188"/>
</dbReference>
<dbReference type="RefSeq" id="NP_015149.1">
    <property type="nucleotide sequence ID" value="NM_001183990.1"/>
</dbReference>
<dbReference type="SMR" id="Q08919"/>
<dbReference type="BioGRID" id="36007">
    <property type="interactions" value="46"/>
</dbReference>
<dbReference type="FunCoup" id="Q08919">
    <property type="interactions" value="44"/>
</dbReference>
<dbReference type="IntAct" id="Q08919">
    <property type="interactions" value="5"/>
</dbReference>
<dbReference type="MINT" id="Q08919"/>
<dbReference type="STRING" id="4932.YPL176C"/>
<dbReference type="TCDB" id="9.B.229.1.6">
    <property type="family name" value="the transferrin receptor, cd71, (tfr) family"/>
</dbReference>
<dbReference type="GlyCosmos" id="Q08919">
    <property type="glycosylation" value="3 sites, No reported glycans"/>
</dbReference>
<dbReference type="GlyGen" id="Q08919">
    <property type="glycosylation" value="3 sites"/>
</dbReference>
<dbReference type="iPTMnet" id="Q08919"/>
<dbReference type="PaxDb" id="4932-YPL176C"/>
<dbReference type="PeptideAtlas" id="Q08919"/>
<dbReference type="EnsemblFungi" id="YPL176C_mRNA">
    <property type="protein sequence ID" value="YPL176C"/>
    <property type="gene ID" value="YPL176C"/>
</dbReference>
<dbReference type="GeneID" id="855927"/>
<dbReference type="KEGG" id="sce:YPL176C"/>
<dbReference type="AGR" id="SGD:S000006097"/>
<dbReference type="SGD" id="S000006097">
    <property type="gene designation" value="TRE1"/>
</dbReference>
<dbReference type="VEuPathDB" id="FungiDB:YPL176C"/>
<dbReference type="eggNOG" id="KOG2195">
    <property type="taxonomic scope" value="Eukaryota"/>
</dbReference>
<dbReference type="GeneTree" id="ENSGT01030000234598"/>
<dbReference type="HOGENOM" id="CLU_005688_1_1_1"/>
<dbReference type="InParanoid" id="Q08919"/>
<dbReference type="OMA" id="RIIDPIY"/>
<dbReference type="OrthoDB" id="5841748at2759"/>
<dbReference type="BioCyc" id="YEAST:G3O-34071-MONOMER"/>
<dbReference type="Reactome" id="R-SCE-8963693">
    <property type="pathway name" value="Aspartate and asparagine metabolism"/>
</dbReference>
<dbReference type="Reactome" id="R-SCE-8980692">
    <property type="pathway name" value="RHOA GTPase cycle"/>
</dbReference>
<dbReference type="Reactome" id="R-SCE-9013026">
    <property type="pathway name" value="RHOB GTPase cycle"/>
</dbReference>
<dbReference type="Reactome" id="R-SCE-9013106">
    <property type="pathway name" value="RHOC GTPase cycle"/>
</dbReference>
<dbReference type="Reactome" id="R-SCE-9013406">
    <property type="pathway name" value="RHOQ GTPase cycle"/>
</dbReference>
<dbReference type="Reactome" id="R-SCE-9696270">
    <property type="pathway name" value="RND2 GTPase cycle"/>
</dbReference>
<dbReference type="Reactome" id="R-SCE-9696273">
    <property type="pathway name" value="RND1 GTPase cycle"/>
</dbReference>
<dbReference type="BioGRID-ORCS" id="855927">
    <property type="hits" value="5 hits in 10 CRISPR screens"/>
</dbReference>
<dbReference type="PRO" id="PR:Q08919"/>
<dbReference type="Proteomes" id="UP000002311">
    <property type="component" value="Chromosome XVI"/>
</dbReference>
<dbReference type="RNAct" id="Q08919">
    <property type="molecule type" value="protein"/>
</dbReference>
<dbReference type="GO" id="GO:0000324">
    <property type="term" value="C:fungal-type vacuole"/>
    <property type="evidence" value="ECO:0000314"/>
    <property type="project" value="SGD"/>
</dbReference>
<dbReference type="GO" id="GO:0005886">
    <property type="term" value="C:plasma membrane"/>
    <property type="evidence" value="ECO:0007669"/>
    <property type="project" value="UniProtKB-SubCell"/>
</dbReference>
<dbReference type="GO" id="GO:0004180">
    <property type="term" value="F:carboxypeptidase activity"/>
    <property type="evidence" value="ECO:0000318"/>
    <property type="project" value="GO_Central"/>
</dbReference>
<dbReference type="GO" id="GO:0043328">
    <property type="term" value="P:protein transport to vacuole involved in ubiquitin-dependent protein catabolic process via the multivesicular body sorting pathway"/>
    <property type="evidence" value="ECO:0000316"/>
    <property type="project" value="SGD"/>
</dbReference>
<dbReference type="CDD" id="cd03874">
    <property type="entry name" value="M28_PMSA_TfR_like"/>
    <property type="match status" value="1"/>
</dbReference>
<dbReference type="FunFam" id="3.40.630.10:FF:000094">
    <property type="entry name" value="Transferrrin receptor-like protein"/>
    <property type="match status" value="1"/>
</dbReference>
<dbReference type="Gene3D" id="3.50.30.30">
    <property type="match status" value="1"/>
</dbReference>
<dbReference type="Gene3D" id="1.20.930.40">
    <property type="entry name" value="Transferrin receptor-like, dimerisation domain"/>
    <property type="match status" value="1"/>
</dbReference>
<dbReference type="Gene3D" id="3.40.630.10">
    <property type="entry name" value="Zn peptidases"/>
    <property type="match status" value="1"/>
</dbReference>
<dbReference type="InterPro" id="IPR046450">
    <property type="entry name" value="PA_dom_sf"/>
</dbReference>
<dbReference type="InterPro" id="IPR039373">
    <property type="entry name" value="Peptidase_M28B"/>
</dbReference>
<dbReference type="InterPro" id="IPR007365">
    <property type="entry name" value="TFR-like_dimer_dom"/>
</dbReference>
<dbReference type="InterPro" id="IPR036757">
    <property type="entry name" value="TFR-like_dimer_dom_sf"/>
</dbReference>
<dbReference type="PANTHER" id="PTHR10404">
    <property type="entry name" value="N-ACETYLATED-ALPHA-LINKED ACIDIC DIPEPTIDASE"/>
    <property type="match status" value="1"/>
</dbReference>
<dbReference type="PANTHER" id="PTHR10404:SF72">
    <property type="entry name" value="ZINC METALLOPROTEASE TRE2-RELATED"/>
    <property type="match status" value="1"/>
</dbReference>
<dbReference type="Pfam" id="PF04253">
    <property type="entry name" value="TFR_dimer"/>
    <property type="match status" value="1"/>
</dbReference>
<dbReference type="SUPFAM" id="SSF52025">
    <property type="entry name" value="PA domain"/>
    <property type="match status" value="1"/>
</dbReference>
<dbReference type="SUPFAM" id="SSF47672">
    <property type="entry name" value="Transferrin receptor-like dimerisation domain"/>
    <property type="match status" value="1"/>
</dbReference>
<dbReference type="SUPFAM" id="SSF53187">
    <property type="entry name" value="Zn-dependent exopeptidases"/>
    <property type="match status" value="1"/>
</dbReference>
<name>TRE1_YEAST</name>
<organism>
    <name type="scientific">Saccharomyces cerevisiae (strain ATCC 204508 / S288c)</name>
    <name type="common">Baker's yeast</name>
    <dbReference type="NCBI Taxonomy" id="559292"/>
    <lineage>
        <taxon>Eukaryota</taxon>
        <taxon>Fungi</taxon>
        <taxon>Dikarya</taxon>
        <taxon>Ascomycota</taxon>
        <taxon>Saccharomycotina</taxon>
        <taxon>Saccharomycetes</taxon>
        <taxon>Saccharomycetales</taxon>
        <taxon>Saccharomycetaceae</taxon>
        <taxon>Saccharomyces</taxon>
    </lineage>
</organism>
<accession>Q08919</accession>
<accession>D6W3J2</accession>
<feature type="chain" id="PRO_0000238622" description="Uncharacterized protein TRE1">
    <location>
        <begin position="1"/>
        <end position="783"/>
    </location>
</feature>
<feature type="topological domain" description="Cytoplasmic" evidence="1">
    <location>
        <begin position="1"/>
        <end position="109"/>
    </location>
</feature>
<feature type="transmembrane region" description="Helical; Signal-anchor for type II membrane protein" evidence="1">
    <location>
        <begin position="110"/>
        <end position="127"/>
    </location>
</feature>
<feature type="topological domain" description="Extracellular" evidence="1">
    <location>
        <begin position="128"/>
        <end position="783"/>
    </location>
</feature>
<feature type="domain" description="PA">
    <location>
        <begin position="241"/>
        <end position="333"/>
    </location>
</feature>
<feature type="region of interest" description="Disordered" evidence="2">
    <location>
        <begin position="1"/>
        <end position="22"/>
    </location>
</feature>
<feature type="glycosylation site" description="N-linked (GlcNAc...) asparagine" evidence="1">
    <location>
        <position position="139"/>
    </location>
</feature>
<feature type="glycosylation site" description="N-linked (GlcNAc...) asparagine" evidence="1">
    <location>
        <position position="213"/>
    </location>
</feature>
<feature type="glycosylation site" description="N-linked (GlcNAc...) asparagine" evidence="1">
    <location>
        <position position="529"/>
    </location>
</feature>
<reference key="1">
    <citation type="journal article" date="1997" name="Nature">
        <title>The nucleotide sequence of Saccharomyces cerevisiae chromosome XVI.</title>
        <authorList>
            <person name="Bussey H."/>
            <person name="Storms R.K."/>
            <person name="Ahmed A."/>
            <person name="Albermann K."/>
            <person name="Allen E."/>
            <person name="Ansorge W."/>
            <person name="Araujo R."/>
            <person name="Aparicio A."/>
            <person name="Barrell B.G."/>
            <person name="Badcock K."/>
            <person name="Benes V."/>
            <person name="Botstein D."/>
            <person name="Bowman S."/>
            <person name="Brueckner M."/>
            <person name="Carpenter J."/>
            <person name="Cherry J.M."/>
            <person name="Chung E."/>
            <person name="Churcher C.M."/>
            <person name="Coster F."/>
            <person name="Davis K."/>
            <person name="Davis R.W."/>
            <person name="Dietrich F.S."/>
            <person name="Delius H."/>
            <person name="DiPaolo T."/>
            <person name="Dubois E."/>
            <person name="Duesterhoeft A."/>
            <person name="Duncan M."/>
            <person name="Floeth M."/>
            <person name="Fortin N."/>
            <person name="Friesen J.D."/>
            <person name="Fritz C."/>
            <person name="Goffeau A."/>
            <person name="Hall J."/>
            <person name="Hebling U."/>
            <person name="Heumann K."/>
            <person name="Hilbert H."/>
            <person name="Hillier L.W."/>
            <person name="Hunicke-Smith S."/>
            <person name="Hyman R.W."/>
            <person name="Johnston M."/>
            <person name="Kalman S."/>
            <person name="Kleine K."/>
            <person name="Komp C."/>
            <person name="Kurdi O."/>
            <person name="Lashkari D."/>
            <person name="Lew H."/>
            <person name="Lin A."/>
            <person name="Lin D."/>
            <person name="Louis E.J."/>
            <person name="Marathe R."/>
            <person name="Messenguy F."/>
            <person name="Mewes H.-W."/>
            <person name="Mirtipati S."/>
            <person name="Moestl D."/>
            <person name="Mueller-Auer S."/>
            <person name="Namath A."/>
            <person name="Nentwich U."/>
            <person name="Oefner P."/>
            <person name="Pearson D."/>
            <person name="Petel F.X."/>
            <person name="Pohl T.M."/>
            <person name="Purnelle B."/>
            <person name="Rajandream M.A."/>
            <person name="Rechmann S."/>
            <person name="Rieger M."/>
            <person name="Riles L."/>
            <person name="Roberts D."/>
            <person name="Schaefer M."/>
            <person name="Scharfe M."/>
            <person name="Scherens B."/>
            <person name="Schramm S."/>
            <person name="Schroeder M."/>
            <person name="Sdicu A.-M."/>
            <person name="Tettelin H."/>
            <person name="Urrestarazu L.A."/>
            <person name="Ushinsky S."/>
            <person name="Vierendeels F."/>
            <person name="Vissers S."/>
            <person name="Voss H."/>
            <person name="Walsh S.V."/>
            <person name="Wambutt R."/>
            <person name="Wang Y."/>
            <person name="Wedler E."/>
            <person name="Wedler H."/>
            <person name="Winnett E."/>
            <person name="Zhong W.-W."/>
            <person name="Zollner A."/>
            <person name="Vo D.H."/>
            <person name="Hani J."/>
        </authorList>
    </citation>
    <scope>NUCLEOTIDE SEQUENCE [LARGE SCALE GENOMIC DNA]</scope>
    <source>
        <strain>ATCC 204508 / S288c</strain>
    </source>
</reference>
<reference key="2">
    <citation type="journal article" date="2014" name="G3 (Bethesda)">
        <title>The reference genome sequence of Saccharomyces cerevisiae: Then and now.</title>
        <authorList>
            <person name="Engel S.R."/>
            <person name="Dietrich F.S."/>
            <person name="Fisk D.G."/>
            <person name="Binkley G."/>
            <person name="Balakrishnan R."/>
            <person name="Costanzo M.C."/>
            <person name="Dwight S.S."/>
            <person name="Hitz B.C."/>
            <person name="Karra K."/>
            <person name="Nash R.S."/>
            <person name="Weng S."/>
            <person name="Wong E.D."/>
            <person name="Lloyd P."/>
            <person name="Skrzypek M.S."/>
            <person name="Miyasato S.R."/>
            <person name="Simison M."/>
            <person name="Cherry J.M."/>
        </authorList>
    </citation>
    <scope>GENOME REANNOTATION</scope>
    <source>
        <strain>ATCC 204508 / S288c</strain>
    </source>
</reference>
<reference key="3">
    <citation type="journal article" date="2002" name="Proc. Natl. Acad. Sci. U.S.A.">
        <title>Cell surface polarization during yeast mating.</title>
        <authorList>
            <person name="Bagnat M."/>
            <person name="Simons K."/>
        </authorList>
    </citation>
    <scope>SUBCELLULAR LOCATION</scope>
</reference>
<reference key="4">
    <citation type="journal article" date="2003" name="Nature">
        <title>Global analysis of protein expression in yeast.</title>
        <authorList>
            <person name="Ghaemmaghami S."/>
            <person name="Huh W.-K."/>
            <person name="Bower K."/>
            <person name="Howson R.W."/>
            <person name="Belle A."/>
            <person name="Dephoure N."/>
            <person name="O'Shea E.K."/>
            <person name="Weissman J.S."/>
        </authorList>
    </citation>
    <scope>LEVEL OF PROTEIN EXPRESSION [LARGE SCALE ANALYSIS]</scope>
</reference>
<evidence type="ECO:0000255" key="1"/>
<evidence type="ECO:0000256" key="2">
    <source>
        <dbReference type="SAM" id="MobiDB-lite"/>
    </source>
</evidence>
<evidence type="ECO:0000269" key="3">
    <source>
    </source>
</evidence>
<evidence type="ECO:0000305" key="4"/>
<comment type="interaction">
    <interactant intactId="EBI-31915">
        <id>Q08919</id>
    </interactant>
    <interactant intactId="EBI-16219">
        <id>P39940</id>
        <label>RSP5</label>
    </interactant>
    <organismsDiffer>false</organismsDiffer>
    <experiments>3</experiments>
</comment>
<comment type="subcellular location">
    <subcellularLocation>
        <location evidence="4">Cell membrane</location>
        <topology evidence="4">Single-pass type II membrane protein</topology>
    </subcellularLocation>
</comment>
<comment type="miscellaneous">
    <text evidence="3">Present with 396 molecules/cell in log phase SD medium.</text>
</comment>